<dbReference type="EMBL" id="CU329670">
    <property type="protein sequence ID" value="CAA90475.2"/>
    <property type="molecule type" value="Genomic_DNA"/>
</dbReference>
<dbReference type="PIR" id="S58093">
    <property type="entry name" value="S58093"/>
</dbReference>
<dbReference type="RefSeq" id="XP_001713040.1">
    <property type="nucleotide sequence ID" value="XM_001712988.2"/>
</dbReference>
<dbReference type="SMR" id="Q09682"/>
<dbReference type="BioGRID" id="280594">
    <property type="interactions" value="19"/>
</dbReference>
<dbReference type="ComplexPortal" id="CPX-9077">
    <property type="entry name" value="26S proteasome complex"/>
</dbReference>
<dbReference type="FunCoup" id="Q09682">
    <property type="interactions" value="545"/>
</dbReference>
<dbReference type="STRING" id="284812.Q09682"/>
<dbReference type="iPTMnet" id="Q09682"/>
<dbReference type="PaxDb" id="4896-SPAC13C5.01c.1"/>
<dbReference type="EnsemblFungi" id="SPAC13C5.01c.1">
    <property type="protein sequence ID" value="SPAC13C5.01c.1:pep"/>
    <property type="gene ID" value="SPAC13C5.01c"/>
</dbReference>
<dbReference type="PomBase" id="SPAC13C5.01c"/>
<dbReference type="VEuPathDB" id="FungiDB:SPAC13C5.01c"/>
<dbReference type="eggNOG" id="KOG0178">
    <property type="taxonomic scope" value="Eukaryota"/>
</dbReference>
<dbReference type="HOGENOM" id="CLU_035750_4_3_1"/>
<dbReference type="InParanoid" id="Q09682"/>
<dbReference type="OMA" id="YVLNDNM"/>
<dbReference type="PhylomeDB" id="Q09682"/>
<dbReference type="Reactome" id="R-SPO-1236978">
    <property type="pathway name" value="Cross-presentation of soluble exogenous antigens (endosomes)"/>
</dbReference>
<dbReference type="Reactome" id="R-SPO-350562">
    <property type="pathway name" value="Regulation of ornithine decarboxylase (ODC)"/>
</dbReference>
<dbReference type="Reactome" id="R-SPO-5687128">
    <property type="pathway name" value="MAPK6/MAPK4 signaling"/>
</dbReference>
<dbReference type="Reactome" id="R-SPO-5689603">
    <property type="pathway name" value="UCH proteinases"/>
</dbReference>
<dbReference type="Reactome" id="R-SPO-5689880">
    <property type="pathway name" value="Ub-specific processing proteases"/>
</dbReference>
<dbReference type="Reactome" id="R-SPO-68949">
    <property type="pathway name" value="Orc1 removal from chromatin"/>
</dbReference>
<dbReference type="Reactome" id="R-SPO-69017">
    <property type="pathway name" value="CDK-mediated phosphorylation and removal of Cdc6"/>
</dbReference>
<dbReference type="Reactome" id="R-SPO-69601">
    <property type="pathway name" value="Ubiquitin Mediated Degradation of Phosphorylated Cdc25A"/>
</dbReference>
<dbReference type="Reactome" id="R-SPO-75815">
    <property type="pathway name" value="Ubiquitin-dependent degradation of Cyclin D"/>
</dbReference>
<dbReference type="Reactome" id="R-SPO-8854050">
    <property type="pathway name" value="FBXL7 down-regulates AURKA during mitotic entry and in early mitosis"/>
</dbReference>
<dbReference type="Reactome" id="R-SPO-8948751">
    <property type="pathway name" value="Regulation of PTEN stability and activity"/>
</dbReference>
<dbReference type="Reactome" id="R-SPO-8951664">
    <property type="pathway name" value="Neddylation"/>
</dbReference>
<dbReference type="Reactome" id="R-SPO-9755511">
    <property type="pathway name" value="KEAP1-NFE2L2 pathway"/>
</dbReference>
<dbReference type="Reactome" id="R-SPO-983168">
    <property type="pathway name" value="Antigen processing: Ubiquitination &amp; Proteasome degradation"/>
</dbReference>
<dbReference type="Reactome" id="R-SPO-9907900">
    <property type="pathway name" value="Proteasome assembly"/>
</dbReference>
<dbReference type="PRO" id="PR:Q09682"/>
<dbReference type="Proteomes" id="UP000002485">
    <property type="component" value="Chromosome I"/>
</dbReference>
<dbReference type="GO" id="GO:0005829">
    <property type="term" value="C:cytosol"/>
    <property type="evidence" value="ECO:0007005"/>
    <property type="project" value="PomBase"/>
</dbReference>
<dbReference type="GO" id="GO:0005634">
    <property type="term" value="C:nucleus"/>
    <property type="evidence" value="ECO:0007005"/>
    <property type="project" value="PomBase"/>
</dbReference>
<dbReference type="GO" id="GO:0019773">
    <property type="term" value="C:proteasome core complex, alpha-subunit complex"/>
    <property type="evidence" value="ECO:0000314"/>
    <property type="project" value="PomBase"/>
</dbReference>
<dbReference type="GO" id="GO:0043161">
    <property type="term" value="P:proteasome-mediated ubiquitin-dependent protein catabolic process"/>
    <property type="evidence" value="ECO:0000318"/>
    <property type="project" value="GO_Central"/>
</dbReference>
<dbReference type="CDD" id="cd03752">
    <property type="entry name" value="proteasome_alpha_type_4"/>
    <property type="match status" value="1"/>
</dbReference>
<dbReference type="FunFam" id="3.60.20.10:FF:000009">
    <property type="entry name" value="Proteasome subunit alpha type-3"/>
    <property type="match status" value="1"/>
</dbReference>
<dbReference type="Gene3D" id="3.60.20.10">
    <property type="entry name" value="Glutamine Phosphoribosylpyrophosphate, subunit 1, domain 1"/>
    <property type="match status" value="1"/>
</dbReference>
<dbReference type="InterPro" id="IPR029055">
    <property type="entry name" value="Ntn_hydrolases_N"/>
</dbReference>
<dbReference type="InterPro" id="IPR050115">
    <property type="entry name" value="Proteasome_alpha"/>
</dbReference>
<dbReference type="InterPro" id="IPR023332">
    <property type="entry name" value="Proteasome_alpha-type"/>
</dbReference>
<dbReference type="InterPro" id="IPR000426">
    <property type="entry name" value="Proteasome_asu_N"/>
</dbReference>
<dbReference type="InterPro" id="IPR016050">
    <property type="entry name" value="Proteasome_bsu_CS"/>
</dbReference>
<dbReference type="InterPro" id="IPR001353">
    <property type="entry name" value="Proteasome_sua/b"/>
</dbReference>
<dbReference type="NCBIfam" id="NF003075">
    <property type="entry name" value="PRK03996.1"/>
    <property type="match status" value="1"/>
</dbReference>
<dbReference type="PANTHER" id="PTHR11599">
    <property type="entry name" value="PROTEASOME SUBUNIT ALPHA/BETA"/>
    <property type="match status" value="1"/>
</dbReference>
<dbReference type="Pfam" id="PF00227">
    <property type="entry name" value="Proteasome"/>
    <property type="match status" value="1"/>
</dbReference>
<dbReference type="Pfam" id="PF10584">
    <property type="entry name" value="Proteasome_A_N"/>
    <property type="match status" value="1"/>
</dbReference>
<dbReference type="SMART" id="SM00948">
    <property type="entry name" value="Proteasome_A_N"/>
    <property type="match status" value="1"/>
</dbReference>
<dbReference type="SUPFAM" id="SSF56235">
    <property type="entry name" value="N-terminal nucleophile aminohydrolases (Ntn hydrolases)"/>
    <property type="match status" value="1"/>
</dbReference>
<dbReference type="PROSITE" id="PS00388">
    <property type="entry name" value="PROTEASOME_ALPHA_1"/>
    <property type="match status" value="1"/>
</dbReference>
<dbReference type="PROSITE" id="PS51475">
    <property type="entry name" value="PROTEASOME_ALPHA_2"/>
    <property type="match status" value="1"/>
</dbReference>
<evidence type="ECO:0000250" key="1"/>
<evidence type="ECO:0000255" key="2">
    <source>
        <dbReference type="PROSITE-ProRule" id="PRU00808"/>
    </source>
</evidence>
<evidence type="ECO:0000269" key="3">
    <source>
    </source>
</evidence>
<name>PSA3_SCHPO</name>
<protein>
    <recommendedName>
        <fullName>Probable proteasome subunit alpha type-3</fullName>
    </recommendedName>
</protein>
<accession>Q09682</accession>
<gene>
    <name type="ORF">SPAC13C5.01c</name>
    <name type="ORF">SPAC31A2.17c</name>
</gene>
<proteinExistence type="inferred from homology"/>
<comment type="function">
    <text evidence="1">The proteasome is a multicatalytic proteinase complex which is characterized by its ability to cleave peptides with Arg, Phe, Tyr, Leu, and Glu adjacent to the leaving group at neutral or slightly basic pH. The proteasome has an ATP-dependent proteolytic activity (By similarity).</text>
</comment>
<comment type="subunit">
    <text evidence="1">The 26S proteasome consists of a 20S proteasome core and two 19S regulatory subunits. The 20S proteasome core is composed of 28 subunits that are arranged in four stacked rings, resulting in a barrel-shaped structure. The two end rings are each formed by seven alpha subunits, and the two central rings are each formed by seven beta subunits. The catalytic chamber with the active sites is on the inside of the barrel (By similarity).</text>
</comment>
<comment type="subcellular location">
    <subcellularLocation>
        <location evidence="3">Cytoplasm</location>
    </subcellularLocation>
    <subcellularLocation>
        <location evidence="3">Nucleus</location>
    </subcellularLocation>
</comment>
<comment type="similarity">
    <text evidence="2">Belongs to the peptidase T1A family.</text>
</comment>
<keyword id="KW-0963">Cytoplasm</keyword>
<keyword id="KW-0539">Nucleus</keyword>
<keyword id="KW-0647">Proteasome</keyword>
<keyword id="KW-1185">Reference proteome</keyword>
<organism>
    <name type="scientific">Schizosaccharomyces pombe (strain 972 / ATCC 24843)</name>
    <name type="common">Fission yeast</name>
    <dbReference type="NCBI Taxonomy" id="284812"/>
    <lineage>
        <taxon>Eukaryota</taxon>
        <taxon>Fungi</taxon>
        <taxon>Dikarya</taxon>
        <taxon>Ascomycota</taxon>
        <taxon>Taphrinomycotina</taxon>
        <taxon>Schizosaccharomycetes</taxon>
        <taxon>Schizosaccharomycetales</taxon>
        <taxon>Schizosaccharomycetaceae</taxon>
        <taxon>Schizosaccharomyces</taxon>
    </lineage>
</organism>
<sequence>MSRSYDSRTTIFSPEGRLYQVEYALEAINHAGVALGIVAKDGIVLAAEKKVTSKLLEQEESAEKLYHIGDNMLCAVAGLTADANILINYARRVGQQYLQTFNEEMPCEQLVRRVCDLKQGYTQYGGLRPFGVSFLYAGWDHIRGYQLFQSNPSGNYGSWQANSIGGNSTSVQSLMRQEYKDDINLDEASAMAVKFLSKTLDSNSLTHEKIEFATITKDTTKNKMVCKIWKSDEINEVLNKYQETQRQS</sequence>
<reference key="1">
    <citation type="journal article" date="2002" name="Nature">
        <title>The genome sequence of Schizosaccharomyces pombe.</title>
        <authorList>
            <person name="Wood V."/>
            <person name="Gwilliam R."/>
            <person name="Rajandream M.A."/>
            <person name="Lyne M.H."/>
            <person name="Lyne R."/>
            <person name="Stewart A."/>
            <person name="Sgouros J.G."/>
            <person name="Peat N."/>
            <person name="Hayles J."/>
            <person name="Baker S.G."/>
            <person name="Basham D."/>
            <person name="Bowman S."/>
            <person name="Brooks K."/>
            <person name="Brown D."/>
            <person name="Brown S."/>
            <person name="Chillingworth T."/>
            <person name="Churcher C.M."/>
            <person name="Collins M."/>
            <person name="Connor R."/>
            <person name="Cronin A."/>
            <person name="Davis P."/>
            <person name="Feltwell T."/>
            <person name="Fraser A."/>
            <person name="Gentles S."/>
            <person name="Goble A."/>
            <person name="Hamlin N."/>
            <person name="Harris D.E."/>
            <person name="Hidalgo J."/>
            <person name="Hodgson G."/>
            <person name="Holroyd S."/>
            <person name="Hornsby T."/>
            <person name="Howarth S."/>
            <person name="Huckle E.J."/>
            <person name="Hunt S."/>
            <person name="Jagels K."/>
            <person name="James K.D."/>
            <person name="Jones L."/>
            <person name="Jones M."/>
            <person name="Leather S."/>
            <person name="McDonald S."/>
            <person name="McLean J."/>
            <person name="Mooney P."/>
            <person name="Moule S."/>
            <person name="Mungall K.L."/>
            <person name="Murphy L.D."/>
            <person name="Niblett D."/>
            <person name="Odell C."/>
            <person name="Oliver K."/>
            <person name="O'Neil S."/>
            <person name="Pearson D."/>
            <person name="Quail M.A."/>
            <person name="Rabbinowitsch E."/>
            <person name="Rutherford K.M."/>
            <person name="Rutter S."/>
            <person name="Saunders D."/>
            <person name="Seeger K."/>
            <person name="Sharp S."/>
            <person name="Skelton J."/>
            <person name="Simmonds M.N."/>
            <person name="Squares R."/>
            <person name="Squares S."/>
            <person name="Stevens K."/>
            <person name="Taylor K."/>
            <person name="Taylor R.G."/>
            <person name="Tivey A."/>
            <person name="Walsh S.V."/>
            <person name="Warren T."/>
            <person name="Whitehead S."/>
            <person name="Woodward J.R."/>
            <person name="Volckaert G."/>
            <person name="Aert R."/>
            <person name="Robben J."/>
            <person name="Grymonprez B."/>
            <person name="Weltjens I."/>
            <person name="Vanstreels E."/>
            <person name="Rieger M."/>
            <person name="Schaefer M."/>
            <person name="Mueller-Auer S."/>
            <person name="Gabel C."/>
            <person name="Fuchs M."/>
            <person name="Duesterhoeft A."/>
            <person name="Fritzc C."/>
            <person name="Holzer E."/>
            <person name="Moestl D."/>
            <person name="Hilbert H."/>
            <person name="Borzym K."/>
            <person name="Langer I."/>
            <person name="Beck A."/>
            <person name="Lehrach H."/>
            <person name="Reinhardt R."/>
            <person name="Pohl T.M."/>
            <person name="Eger P."/>
            <person name="Zimmermann W."/>
            <person name="Wedler H."/>
            <person name="Wambutt R."/>
            <person name="Purnelle B."/>
            <person name="Goffeau A."/>
            <person name="Cadieu E."/>
            <person name="Dreano S."/>
            <person name="Gloux S."/>
            <person name="Lelaure V."/>
            <person name="Mottier S."/>
            <person name="Galibert F."/>
            <person name="Aves S.J."/>
            <person name="Xiang Z."/>
            <person name="Hunt C."/>
            <person name="Moore K."/>
            <person name="Hurst S.M."/>
            <person name="Lucas M."/>
            <person name="Rochet M."/>
            <person name="Gaillardin C."/>
            <person name="Tallada V.A."/>
            <person name="Garzon A."/>
            <person name="Thode G."/>
            <person name="Daga R.R."/>
            <person name="Cruzado L."/>
            <person name="Jimenez J."/>
            <person name="Sanchez M."/>
            <person name="del Rey F."/>
            <person name="Benito J."/>
            <person name="Dominguez A."/>
            <person name="Revuelta J.L."/>
            <person name="Moreno S."/>
            <person name="Armstrong J."/>
            <person name="Forsburg S.L."/>
            <person name="Cerutti L."/>
            <person name="Lowe T."/>
            <person name="McCombie W.R."/>
            <person name="Paulsen I."/>
            <person name="Potashkin J."/>
            <person name="Shpakovski G.V."/>
            <person name="Ussery D."/>
            <person name="Barrell B.G."/>
            <person name="Nurse P."/>
        </authorList>
    </citation>
    <scope>NUCLEOTIDE SEQUENCE [LARGE SCALE GENOMIC DNA]</scope>
    <source>
        <strain>972 / ATCC 24843</strain>
    </source>
</reference>
<reference key="2">
    <citation type="journal article" date="2006" name="Nat. Biotechnol.">
        <title>ORFeome cloning and global analysis of protein localization in the fission yeast Schizosaccharomyces pombe.</title>
        <authorList>
            <person name="Matsuyama A."/>
            <person name="Arai R."/>
            <person name="Yashiroda Y."/>
            <person name="Shirai A."/>
            <person name="Kamata A."/>
            <person name="Sekido S."/>
            <person name="Kobayashi Y."/>
            <person name="Hashimoto A."/>
            <person name="Hamamoto M."/>
            <person name="Hiraoka Y."/>
            <person name="Horinouchi S."/>
            <person name="Yoshida M."/>
        </authorList>
    </citation>
    <scope>SUBCELLULAR LOCATION [LARGE SCALE ANALYSIS]</scope>
</reference>
<feature type="chain" id="PRO_0000124115" description="Probable proteasome subunit alpha type-3">
    <location>
        <begin position="1"/>
        <end position="248"/>
    </location>
</feature>